<sequence length="337" mass="38593">MAFFSRLNLQEGLQTFFVLQWIPVYIFLGAIPILLIPYFLLFSKFWPLAVLSLAWLTYDWNTHSQGGRRSAWVRNWTLWKYFRNYFPVKLVKTHDLSPKHNYIIANHPHGILSFGVFINFATEATGIARIFPSITPFVGTLERIFWIPIVREYVMSMGVCPVSSSALKYLLTQKGSGNAVVIVVGGAAEALLCRPGASTLFLKQRKGFVKMALQTGAYLVPSYSFGENEVFNQETFPEGTWLRLFQKTFQDTFKKILGLNFCTFHGRGFTRGSWGFLPFNRPITTVVGEPLPIPRIKRPNQKTVDKYHALYISALRKLFDQHKVEYGLPETQELTIT</sequence>
<feature type="chain" id="PRO_0000249054" description="Diacylglycerol O-acyltransferase 2-like protein 6">
    <location>
        <begin position="1"/>
        <end position="337"/>
    </location>
</feature>
<feature type="transmembrane region" description="Helical" evidence="1">
    <location>
        <begin position="22"/>
        <end position="42"/>
    </location>
</feature>
<feature type="transmembrane region" description="Helical" evidence="1">
    <location>
        <begin position="102"/>
        <end position="122"/>
    </location>
</feature>
<proteinExistence type="evidence at protein level"/>
<keyword id="KW-0012">Acyltransferase</keyword>
<keyword id="KW-0256">Endoplasmic reticulum</keyword>
<keyword id="KW-0444">Lipid biosynthesis</keyword>
<keyword id="KW-0443">Lipid metabolism</keyword>
<keyword id="KW-0472">Membrane</keyword>
<keyword id="KW-1185">Reference proteome</keyword>
<keyword id="KW-0808">Transferase</keyword>
<keyword id="KW-0812">Transmembrane</keyword>
<keyword id="KW-1133">Transmembrane helix</keyword>
<organism>
    <name type="scientific">Homo sapiens</name>
    <name type="common">Human</name>
    <dbReference type="NCBI Taxonomy" id="9606"/>
    <lineage>
        <taxon>Eukaryota</taxon>
        <taxon>Metazoa</taxon>
        <taxon>Chordata</taxon>
        <taxon>Craniata</taxon>
        <taxon>Vertebrata</taxon>
        <taxon>Euteleostomi</taxon>
        <taxon>Mammalia</taxon>
        <taxon>Eutheria</taxon>
        <taxon>Euarchontoglires</taxon>
        <taxon>Primates</taxon>
        <taxon>Haplorrhini</taxon>
        <taxon>Catarrhini</taxon>
        <taxon>Hominidae</taxon>
        <taxon>Homo</taxon>
    </lineage>
</organism>
<reference key="1">
    <citation type="journal article" date="2004" name="Nat. Genet.">
        <title>Complete sequencing and characterization of 21,243 full-length human cDNAs.</title>
        <authorList>
            <person name="Ota T."/>
            <person name="Suzuki Y."/>
            <person name="Nishikawa T."/>
            <person name="Otsuki T."/>
            <person name="Sugiyama T."/>
            <person name="Irie R."/>
            <person name="Wakamatsu A."/>
            <person name="Hayashi K."/>
            <person name="Sato H."/>
            <person name="Nagai K."/>
            <person name="Kimura K."/>
            <person name="Makita H."/>
            <person name="Sekine M."/>
            <person name="Obayashi M."/>
            <person name="Nishi T."/>
            <person name="Shibahara T."/>
            <person name="Tanaka T."/>
            <person name="Ishii S."/>
            <person name="Yamamoto J."/>
            <person name="Saito K."/>
            <person name="Kawai Y."/>
            <person name="Isono Y."/>
            <person name="Nakamura Y."/>
            <person name="Nagahari K."/>
            <person name="Murakami K."/>
            <person name="Yasuda T."/>
            <person name="Iwayanagi T."/>
            <person name="Wagatsuma M."/>
            <person name="Shiratori A."/>
            <person name="Sudo H."/>
            <person name="Hosoiri T."/>
            <person name="Kaku Y."/>
            <person name="Kodaira H."/>
            <person name="Kondo H."/>
            <person name="Sugawara M."/>
            <person name="Takahashi M."/>
            <person name="Kanda K."/>
            <person name="Yokoi T."/>
            <person name="Furuya T."/>
            <person name="Kikkawa E."/>
            <person name="Omura Y."/>
            <person name="Abe K."/>
            <person name="Kamihara K."/>
            <person name="Katsuta N."/>
            <person name="Sato K."/>
            <person name="Tanikawa M."/>
            <person name="Yamazaki M."/>
            <person name="Ninomiya K."/>
            <person name="Ishibashi T."/>
            <person name="Yamashita H."/>
            <person name="Murakawa K."/>
            <person name="Fujimori K."/>
            <person name="Tanai H."/>
            <person name="Kimata M."/>
            <person name="Watanabe M."/>
            <person name="Hiraoka S."/>
            <person name="Chiba Y."/>
            <person name="Ishida S."/>
            <person name="Ono Y."/>
            <person name="Takiguchi S."/>
            <person name="Watanabe S."/>
            <person name="Yosida M."/>
            <person name="Hotuta T."/>
            <person name="Kusano J."/>
            <person name="Kanehori K."/>
            <person name="Takahashi-Fujii A."/>
            <person name="Hara H."/>
            <person name="Tanase T.-O."/>
            <person name="Nomura Y."/>
            <person name="Togiya S."/>
            <person name="Komai F."/>
            <person name="Hara R."/>
            <person name="Takeuchi K."/>
            <person name="Arita M."/>
            <person name="Imose N."/>
            <person name="Musashino K."/>
            <person name="Yuuki H."/>
            <person name="Oshima A."/>
            <person name="Sasaki N."/>
            <person name="Aotsuka S."/>
            <person name="Yoshikawa Y."/>
            <person name="Matsunawa H."/>
            <person name="Ichihara T."/>
            <person name="Shiohata N."/>
            <person name="Sano S."/>
            <person name="Moriya S."/>
            <person name="Momiyama H."/>
            <person name="Satoh N."/>
            <person name="Takami S."/>
            <person name="Terashima Y."/>
            <person name="Suzuki O."/>
            <person name="Nakagawa S."/>
            <person name="Senoh A."/>
            <person name="Mizoguchi H."/>
            <person name="Goto Y."/>
            <person name="Shimizu F."/>
            <person name="Wakebe H."/>
            <person name="Hishigaki H."/>
            <person name="Watanabe T."/>
            <person name="Sugiyama A."/>
            <person name="Takemoto M."/>
            <person name="Kawakami B."/>
            <person name="Yamazaki M."/>
            <person name="Watanabe K."/>
            <person name="Kumagai A."/>
            <person name="Itakura S."/>
            <person name="Fukuzumi Y."/>
            <person name="Fujimori Y."/>
            <person name="Komiyama M."/>
            <person name="Tashiro H."/>
            <person name="Tanigami A."/>
            <person name="Fujiwara T."/>
            <person name="Ono T."/>
            <person name="Yamada K."/>
            <person name="Fujii Y."/>
            <person name="Ozaki K."/>
            <person name="Hirao M."/>
            <person name="Ohmori Y."/>
            <person name="Kawabata A."/>
            <person name="Hikiji T."/>
            <person name="Kobatake N."/>
            <person name="Inagaki H."/>
            <person name="Ikema Y."/>
            <person name="Okamoto S."/>
            <person name="Okitani R."/>
            <person name="Kawakami T."/>
            <person name="Noguchi S."/>
            <person name="Itoh T."/>
            <person name="Shigeta K."/>
            <person name="Senba T."/>
            <person name="Matsumura K."/>
            <person name="Nakajima Y."/>
            <person name="Mizuno T."/>
            <person name="Morinaga M."/>
            <person name="Sasaki M."/>
            <person name="Togashi T."/>
            <person name="Oyama M."/>
            <person name="Hata H."/>
            <person name="Watanabe M."/>
            <person name="Komatsu T."/>
            <person name="Mizushima-Sugano J."/>
            <person name="Satoh T."/>
            <person name="Shirai Y."/>
            <person name="Takahashi Y."/>
            <person name="Nakagawa K."/>
            <person name="Okumura K."/>
            <person name="Nagase T."/>
            <person name="Nomura N."/>
            <person name="Kikuchi H."/>
            <person name="Masuho Y."/>
            <person name="Yamashita R."/>
            <person name="Nakai K."/>
            <person name="Yada T."/>
            <person name="Nakamura Y."/>
            <person name="Ohara O."/>
            <person name="Isogai T."/>
            <person name="Sugano S."/>
        </authorList>
    </citation>
    <scope>NUCLEOTIDE SEQUENCE [LARGE SCALE MRNA]</scope>
    <source>
        <tissue>Dermoid cancer</tissue>
    </source>
</reference>
<reference key="2">
    <citation type="journal article" date="2005" name="Nature">
        <title>The DNA sequence of the human X chromosome.</title>
        <authorList>
            <person name="Ross M.T."/>
            <person name="Grafham D.V."/>
            <person name="Coffey A.J."/>
            <person name="Scherer S."/>
            <person name="McLay K."/>
            <person name="Muzny D."/>
            <person name="Platzer M."/>
            <person name="Howell G.R."/>
            <person name="Burrows C."/>
            <person name="Bird C.P."/>
            <person name="Frankish A."/>
            <person name="Lovell F.L."/>
            <person name="Howe K.L."/>
            <person name="Ashurst J.L."/>
            <person name="Fulton R.S."/>
            <person name="Sudbrak R."/>
            <person name="Wen G."/>
            <person name="Jones M.C."/>
            <person name="Hurles M.E."/>
            <person name="Andrews T.D."/>
            <person name="Scott C.E."/>
            <person name="Searle S."/>
            <person name="Ramser J."/>
            <person name="Whittaker A."/>
            <person name="Deadman R."/>
            <person name="Carter N.P."/>
            <person name="Hunt S.E."/>
            <person name="Chen R."/>
            <person name="Cree A."/>
            <person name="Gunaratne P."/>
            <person name="Havlak P."/>
            <person name="Hodgson A."/>
            <person name="Metzker M.L."/>
            <person name="Richards S."/>
            <person name="Scott G."/>
            <person name="Steffen D."/>
            <person name="Sodergren E."/>
            <person name="Wheeler D.A."/>
            <person name="Worley K.C."/>
            <person name="Ainscough R."/>
            <person name="Ambrose K.D."/>
            <person name="Ansari-Lari M.A."/>
            <person name="Aradhya S."/>
            <person name="Ashwell R.I."/>
            <person name="Babbage A.K."/>
            <person name="Bagguley C.L."/>
            <person name="Ballabio A."/>
            <person name="Banerjee R."/>
            <person name="Barker G.E."/>
            <person name="Barlow K.F."/>
            <person name="Barrett I.P."/>
            <person name="Bates K.N."/>
            <person name="Beare D.M."/>
            <person name="Beasley H."/>
            <person name="Beasley O."/>
            <person name="Beck A."/>
            <person name="Bethel G."/>
            <person name="Blechschmidt K."/>
            <person name="Brady N."/>
            <person name="Bray-Allen S."/>
            <person name="Bridgeman A.M."/>
            <person name="Brown A.J."/>
            <person name="Brown M.J."/>
            <person name="Bonnin D."/>
            <person name="Bruford E.A."/>
            <person name="Buhay C."/>
            <person name="Burch P."/>
            <person name="Burford D."/>
            <person name="Burgess J."/>
            <person name="Burrill W."/>
            <person name="Burton J."/>
            <person name="Bye J.M."/>
            <person name="Carder C."/>
            <person name="Carrel L."/>
            <person name="Chako J."/>
            <person name="Chapman J.C."/>
            <person name="Chavez D."/>
            <person name="Chen E."/>
            <person name="Chen G."/>
            <person name="Chen Y."/>
            <person name="Chen Z."/>
            <person name="Chinault C."/>
            <person name="Ciccodicola A."/>
            <person name="Clark S.Y."/>
            <person name="Clarke G."/>
            <person name="Clee C.M."/>
            <person name="Clegg S."/>
            <person name="Clerc-Blankenburg K."/>
            <person name="Clifford K."/>
            <person name="Cobley V."/>
            <person name="Cole C.G."/>
            <person name="Conquer J.S."/>
            <person name="Corby N."/>
            <person name="Connor R.E."/>
            <person name="David R."/>
            <person name="Davies J."/>
            <person name="Davis C."/>
            <person name="Davis J."/>
            <person name="Delgado O."/>
            <person name="Deshazo D."/>
            <person name="Dhami P."/>
            <person name="Ding Y."/>
            <person name="Dinh H."/>
            <person name="Dodsworth S."/>
            <person name="Draper H."/>
            <person name="Dugan-Rocha S."/>
            <person name="Dunham A."/>
            <person name="Dunn M."/>
            <person name="Durbin K.J."/>
            <person name="Dutta I."/>
            <person name="Eades T."/>
            <person name="Ellwood M."/>
            <person name="Emery-Cohen A."/>
            <person name="Errington H."/>
            <person name="Evans K.L."/>
            <person name="Faulkner L."/>
            <person name="Francis F."/>
            <person name="Frankland J."/>
            <person name="Fraser A.E."/>
            <person name="Galgoczy P."/>
            <person name="Gilbert J."/>
            <person name="Gill R."/>
            <person name="Gloeckner G."/>
            <person name="Gregory S.G."/>
            <person name="Gribble S."/>
            <person name="Griffiths C."/>
            <person name="Grocock R."/>
            <person name="Gu Y."/>
            <person name="Gwilliam R."/>
            <person name="Hamilton C."/>
            <person name="Hart E.A."/>
            <person name="Hawes A."/>
            <person name="Heath P.D."/>
            <person name="Heitmann K."/>
            <person name="Hennig S."/>
            <person name="Hernandez J."/>
            <person name="Hinzmann B."/>
            <person name="Ho S."/>
            <person name="Hoffs M."/>
            <person name="Howden P.J."/>
            <person name="Huckle E.J."/>
            <person name="Hume J."/>
            <person name="Hunt P.J."/>
            <person name="Hunt A.R."/>
            <person name="Isherwood J."/>
            <person name="Jacob L."/>
            <person name="Johnson D."/>
            <person name="Jones S."/>
            <person name="de Jong P.J."/>
            <person name="Joseph S.S."/>
            <person name="Keenan S."/>
            <person name="Kelly S."/>
            <person name="Kershaw J.K."/>
            <person name="Khan Z."/>
            <person name="Kioschis P."/>
            <person name="Klages S."/>
            <person name="Knights A.J."/>
            <person name="Kosiura A."/>
            <person name="Kovar-Smith C."/>
            <person name="Laird G.K."/>
            <person name="Langford C."/>
            <person name="Lawlor S."/>
            <person name="Leversha M."/>
            <person name="Lewis L."/>
            <person name="Liu W."/>
            <person name="Lloyd C."/>
            <person name="Lloyd D.M."/>
            <person name="Loulseged H."/>
            <person name="Loveland J.E."/>
            <person name="Lovell J.D."/>
            <person name="Lozado R."/>
            <person name="Lu J."/>
            <person name="Lyne R."/>
            <person name="Ma J."/>
            <person name="Maheshwari M."/>
            <person name="Matthews L.H."/>
            <person name="McDowall J."/>
            <person name="McLaren S."/>
            <person name="McMurray A."/>
            <person name="Meidl P."/>
            <person name="Meitinger T."/>
            <person name="Milne S."/>
            <person name="Miner G."/>
            <person name="Mistry S.L."/>
            <person name="Morgan M."/>
            <person name="Morris S."/>
            <person name="Mueller I."/>
            <person name="Mullikin J.C."/>
            <person name="Nguyen N."/>
            <person name="Nordsiek G."/>
            <person name="Nyakatura G."/>
            <person name="O'dell C.N."/>
            <person name="Okwuonu G."/>
            <person name="Palmer S."/>
            <person name="Pandian R."/>
            <person name="Parker D."/>
            <person name="Parrish J."/>
            <person name="Pasternak S."/>
            <person name="Patel D."/>
            <person name="Pearce A.V."/>
            <person name="Pearson D.M."/>
            <person name="Pelan S.E."/>
            <person name="Perez L."/>
            <person name="Porter K.M."/>
            <person name="Ramsey Y."/>
            <person name="Reichwald K."/>
            <person name="Rhodes S."/>
            <person name="Ridler K.A."/>
            <person name="Schlessinger D."/>
            <person name="Schueler M.G."/>
            <person name="Sehra H.K."/>
            <person name="Shaw-Smith C."/>
            <person name="Shen H."/>
            <person name="Sheridan E.M."/>
            <person name="Shownkeen R."/>
            <person name="Skuce C.D."/>
            <person name="Smith M.L."/>
            <person name="Sotheran E.C."/>
            <person name="Steingruber H.E."/>
            <person name="Steward C.A."/>
            <person name="Storey R."/>
            <person name="Swann R.M."/>
            <person name="Swarbreck D."/>
            <person name="Tabor P.E."/>
            <person name="Taudien S."/>
            <person name="Taylor T."/>
            <person name="Teague B."/>
            <person name="Thomas K."/>
            <person name="Thorpe A."/>
            <person name="Timms K."/>
            <person name="Tracey A."/>
            <person name="Trevanion S."/>
            <person name="Tromans A.C."/>
            <person name="d'Urso M."/>
            <person name="Verduzco D."/>
            <person name="Villasana D."/>
            <person name="Waldron L."/>
            <person name="Wall M."/>
            <person name="Wang Q."/>
            <person name="Warren J."/>
            <person name="Warry G.L."/>
            <person name="Wei X."/>
            <person name="West A."/>
            <person name="Whitehead S.L."/>
            <person name="Whiteley M.N."/>
            <person name="Wilkinson J.E."/>
            <person name="Willey D.L."/>
            <person name="Williams G."/>
            <person name="Williams L."/>
            <person name="Williamson A."/>
            <person name="Williamson H."/>
            <person name="Wilming L."/>
            <person name="Woodmansey R.L."/>
            <person name="Wray P.W."/>
            <person name="Yen J."/>
            <person name="Zhang J."/>
            <person name="Zhou J."/>
            <person name="Zoghbi H."/>
            <person name="Zorilla S."/>
            <person name="Buck D."/>
            <person name="Reinhardt R."/>
            <person name="Poustka A."/>
            <person name="Rosenthal A."/>
            <person name="Lehrach H."/>
            <person name="Meindl A."/>
            <person name="Minx P.J."/>
            <person name="Hillier L.W."/>
            <person name="Willard H.F."/>
            <person name="Wilson R.K."/>
            <person name="Waterston R.H."/>
            <person name="Rice C.M."/>
            <person name="Vaudin M."/>
            <person name="Coulson A."/>
            <person name="Nelson D.L."/>
            <person name="Weinstock G."/>
            <person name="Sulston J.E."/>
            <person name="Durbin R.M."/>
            <person name="Hubbard T."/>
            <person name="Gibbs R.A."/>
            <person name="Beck S."/>
            <person name="Rogers J."/>
            <person name="Bentley D.R."/>
        </authorList>
    </citation>
    <scope>NUCLEOTIDE SEQUENCE [LARGE SCALE GENOMIC DNA]</scope>
</reference>
<reference key="3">
    <citation type="journal article" date="2003" name="Cytogenet. Genome Res.">
        <title>Genomic organization of the DGAT2/MOGAT gene family in cattle (Bos taurus) and other mammals.</title>
        <authorList>
            <person name="Winter A."/>
            <person name="van Eckeveld M."/>
            <person name="Bininda-Emonds O.R.P."/>
            <person name="Habermann F.A."/>
            <person name="Fries R."/>
        </authorList>
    </citation>
    <scope>IDENTIFICATION</scope>
</reference>
<reference key="4">
    <citation type="journal article" date="2005" name="J. Biol. Chem.">
        <title>Identification of two novel human Acyl-CoA wax alcohol acyltransferases: members of the diacylglycerol acyltransferase 2 (DGAT2) gene superfamily.</title>
        <authorList>
            <person name="Turkish A.R."/>
            <person name="Henneberry A.L."/>
            <person name="Cromley D."/>
            <person name="Padamsee M."/>
            <person name="Oelkers P."/>
            <person name="Bazzi H."/>
            <person name="Christiano A.M."/>
            <person name="Billheimer J.T."/>
            <person name="Sturley S.L."/>
        </authorList>
    </citation>
    <scope>CATALYTIC ACTIVITY</scope>
    <scope>LACK OF WAX SYNTHASE ACTIVITY</scope>
    <scope>TISSUE SPECIFICITY</scope>
</reference>
<reference key="5">
    <citation type="journal article" date="2017" name="J. Lipid Res.">
        <title>Synthesis of neutral ether lipid monoalkyl-diacylglycerol by lipid acyltransferases.</title>
        <authorList>
            <person name="Ma Z."/>
            <person name="Onorato J.M."/>
            <person name="Chen L."/>
            <person name="Nelson D.W."/>
            <person name="Yen C.E."/>
            <person name="Cheng D."/>
        </authorList>
    </citation>
    <scope>CATALYTIC ACTIVITY</scope>
    <scope>FUNCTION</scope>
</reference>
<dbReference type="EC" id="2.3.1.-" evidence="2"/>
<dbReference type="EMBL" id="AK129500">
    <property type="protein sequence ID" value="BAC85167.1"/>
    <property type="molecule type" value="mRNA"/>
</dbReference>
<dbReference type="EMBL" id="AL139111">
    <property type="status" value="NOT_ANNOTATED_CDS"/>
    <property type="molecule type" value="Genomic_DNA"/>
</dbReference>
<dbReference type="EMBL" id="AL357752">
    <property type="status" value="NOT_ANNOTATED_CDS"/>
    <property type="molecule type" value="Genomic_DNA"/>
</dbReference>
<dbReference type="EMBL" id="BN000157">
    <property type="protein sequence ID" value="CAD89268.1"/>
    <property type="molecule type" value="mRNA"/>
</dbReference>
<dbReference type="CCDS" id="CCDS14397.1"/>
<dbReference type="RefSeq" id="NP_940914.1">
    <property type="nucleotide sequence ID" value="NM_198512.3"/>
</dbReference>
<dbReference type="BioGRID" id="131445">
    <property type="interactions" value="49"/>
</dbReference>
<dbReference type="FunCoup" id="Q6ZPD8">
    <property type="interactions" value="34"/>
</dbReference>
<dbReference type="IntAct" id="Q6ZPD8">
    <property type="interactions" value="44"/>
</dbReference>
<dbReference type="STRING" id="9606.ENSP00000328036"/>
<dbReference type="BindingDB" id="Q6ZPD8"/>
<dbReference type="ChEMBL" id="CHEMBL5465322"/>
<dbReference type="SwissLipids" id="SLP:000000305"/>
<dbReference type="GlyCosmos" id="Q6ZPD8">
    <property type="glycosylation" value="1 site, 1 glycan"/>
</dbReference>
<dbReference type="GlyGen" id="Q6ZPD8">
    <property type="glycosylation" value="1 site, 1 O-linked glycan (1 site)"/>
</dbReference>
<dbReference type="iPTMnet" id="Q6ZPD8"/>
<dbReference type="PhosphoSitePlus" id="Q6ZPD8"/>
<dbReference type="BioMuta" id="DGAT2L6"/>
<dbReference type="DMDM" id="74749597"/>
<dbReference type="MassIVE" id="Q6ZPD8"/>
<dbReference type="PaxDb" id="9606-ENSP00000328036"/>
<dbReference type="PeptideAtlas" id="Q6ZPD8"/>
<dbReference type="ProteomicsDB" id="68076"/>
<dbReference type="Antibodypedia" id="13248">
    <property type="antibodies" value="38 antibodies from 18 providers"/>
</dbReference>
<dbReference type="DNASU" id="347516"/>
<dbReference type="Ensembl" id="ENST00000333026.4">
    <property type="protein sequence ID" value="ENSP00000328036.3"/>
    <property type="gene ID" value="ENSG00000184210.6"/>
</dbReference>
<dbReference type="GeneID" id="347516"/>
<dbReference type="KEGG" id="hsa:347516"/>
<dbReference type="MANE-Select" id="ENST00000333026.4">
    <property type="protein sequence ID" value="ENSP00000328036.3"/>
    <property type="RefSeq nucleotide sequence ID" value="NM_198512.3"/>
    <property type="RefSeq protein sequence ID" value="NP_940914.1"/>
</dbReference>
<dbReference type="UCSC" id="uc004dxx.2">
    <property type="organism name" value="human"/>
</dbReference>
<dbReference type="AGR" id="HGNC:23250"/>
<dbReference type="CTD" id="347516"/>
<dbReference type="DisGeNET" id="347516"/>
<dbReference type="GeneCards" id="DGAT2L6"/>
<dbReference type="HGNC" id="HGNC:23250">
    <property type="gene designation" value="DGAT2L6"/>
</dbReference>
<dbReference type="HPA" id="ENSG00000184210">
    <property type="expression patterns" value="Group enriched (breast, skin)"/>
</dbReference>
<dbReference type="MIM" id="300926">
    <property type="type" value="gene"/>
</dbReference>
<dbReference type="neXtProt" id="NX_Q6ZPD8"/>
<dbReference type="OpenTargets" id="ENSG00000184210"/>
<dbReference type="PharmGKB" id="PA143485448"/>
<dbReference type="VEuPathDB" id="HostDB:ENSG00000184210"/>
<dbReference type="eggNOG" id="KOG0831">
    <property type="taxonomic scope" value="Eukaryota"/>
</dbReference>
<dbReference type="GeneTree" id="ENSGT01030000234582"/>
<dbReference type="HOGENOM" id="CLU_023995_0_0_1"/>
<dbReference type="InParanoid" id="Q6ZPD8"/>
<dbReference type="OMA" id="GTWIRFF"/>
<dbReference type="OrthoDB" id="264532at2759"/>
<dbReference type="PAN-GO" id="Q6ZPD8">
    <property type="GO annotations" value="3 GO annotations based on evolutionary models"/>
</dbReference>
<dbReference type="PhylomeDB" id="Q6ZPD8"/>
<dbReference type="TreeFam" id="TF314707"/>
<dbReference type="BRENDA" id="2.3.1.20">
    <property type="organism ID" value="2681"/>
</dbReference>
<dbReference type="BRENDA" id="2.3.1.75">
    <property type="organism ID" value="2681"/>
</dbReference>
<dbReference type="PathwayCommons" id="Q6ZPD8"/>
<dbReference type="Reactome" id="R-HSA-1482883">
    <property type="pathway name" value="Acyl chain remodeling of DAG and TAG"/>
</dbReference>
<dbReference type="SignaLink" id="Q6ZPD8"/>
<dbReference type="BioGRID-ORCS" id="347516">
    <property type="hits" value="6 hits in 764 CRISPR screens"/>
</dbReference>
<dbReference type="GenomeRNAi" id="347516"/>
<dbReference type="Pharos" id="Q6ZPD8">
    <property type="development level" value="Tbio"/>
</dbReference>
<dbReference type="PRO" id="PR:Q6ZPD8"/>
<dbReference type="Proteomes" id="UP000005640">
    <property type="component" value="Chromosome X"/>
</dbReference>
<dbReference type="RNAct" id="Q6ZPD8">
    <property type="molecule type" value="protein"/>
</dbReference>
<dbReference type="Bgee" id="ENSG00000184210">
    <property type="expression patterns" value="Expressed in sural nerve and 9 other cell types or tissues"/>
</dbReference>
<dbReference type="GO" id="GO:0005789">
    <property type="term" value="C:endoplasmic reticulum membrane"/>
    <property type="evidence" value="ECO:0000318"/>
    <property type="project" value="GO_Central"/>
</dbReference>
<dbReference type="GO" id="GO:0004144">
    <property type="term" value="F:diacylglycerol O-acyltransferase activity"/>
    <property type="evidence" value="ECO:0000269"/>
    <property type="project" value="Reactome"/>
</dbReference>
<dbReference type="GO" id="GO:0008374">
    <property type="term" value="F:O-acyltransferase activity"/>
    <property type="evidence" value="ECO:0000318"/>
    <property type="project" value="GO_Central"/>
</dbReference>
<dbReference type="GO" id="GO:0036155">
    <property type="term" value="P:acylglycerol acyl-chain remodeling"/>
    <property type="evidence" value="ECO:0000304"/>
    <property type="project" value="Reactome"/>
</dbReference>
<dbReference type="GO" id="GO:0006629">
    <property type="term" value="P:lipid metabolic process"/>
    <property type="evidence" value="ECO:0000318"/>
    <property type="project" value="GO_Central"/>
</dbReference>
<dbReference type="GO" id="GO:0006640">
    <property type="term" value="P:monoacylglycerol biosynthetic process"/>
    <property type="evidence" value="ECO:0000314"/>
    <property type="project" value="UniProtKB"/>
</dbReference>
<dbReference type="CDD" id="cd07987">
    <property type="entry name" value="LPLAT_MGAT-like"/>
    <property type="match status" value="1"/>
</dbReference>
<dbReference type="InterPro" id="IPR007130">
    <property type="entry name" value="DAGAT"/>
</dbReference>
<dbReference type="PANTHER" id="PTHR12317">
    <property type="entry name" value="DIACYLGLYCEROL O-ACYLTRANSFERASE"/>
    <property type="match status" value="1"/>
</dbReference>
<dbReference type="PANTHER" id="PTHR12317:SF19">
    <property type="entry name" value="DIACYLGLYCEROL O-ACYLTRANSFERASE 2-LIKE PROTEIN 6"/>
    <property type="match status" value="1"/>
</dbReference>
<dbReference type="Pfam" id="PF03982">
    <property type="entry name" value="DAGAT"/>
    <property type="match status" value="1"/>
</dbReference>
<protein>
    <recommendedName>
        <fullName>Diacylglycerol O-acyltransferase 2-like protein 6</fullName>
        <ecNumber evidence="2">2.3.1.-</ecNumber>
    </recommendedName>
    <alternativeName>
        <fullName>Diacylglycerol O-acyltransferase candidate 3</fullName>
        <shortName>hDC3</shortName>
    </alternativeName>
</protein>
<comment type="function">
    <text evidence="2 3">Diglyceride acyltransferase that uses fatty acyl-CoA as substrate (PubMed:15671038). Particularly active with oleate as a substrate (PubMed:15671038). Has no wax synthase activity to produce wax esters (PubMed:15671038). Able to use 1-monoalkylglycerol (1-MAkG) as an acyl acceptor for the synthesis of monoalkyl-monoacylglycerol (MAMAG) (PubMed:28420705).</text>
</comment>
<comment type="catalytic activity">
    <reaction evidence="2">
        <text>1,2-di-(9Z-octadecenoyl)-sn-glycerol + (9Z)-octadecenoyl-CoA = 1,2,3-tri-(9Z-octadecenoyl)-glycerol + CoA</text>
        <dbReference type="Rhea" id="RHEA:38219"/>
        <dbReference type="ChEBI" id="CHEBI:52333"/>
        <dbReference type="ChEBI" id="CHEBI:53753"/>
        <dbReference type="ChEBI" id="CHEBI:57287"/>
        <dbReference type="ChEBI" id="CHEBI:57387"/>
    </reaction>
    <physiologicalReaction direction="left-to-right" evidence="5">
        <dbReference type="Rhea" id="RHEA:38220"/>
    </physiologicalReaction>
</comment>
<comment type="catalytic activity">
    <reaction evidence="3">
        <text>1-O-(9Z-octadecenyl)-glycerol + (9Z)-octadecenoyl-CoA = 1-O-(9Z-octadecyl)-3-(9Z-octadecenoyl)-glycerol + CoA</text>
        <dbReference type="Rhea" id="RHEA:55340"/>
        <dbReference type="ChEBI" id="CHEBI:34116"/>
        <dbReference type="ChEBI" id="CHEBI:57287"/>
        <dbReference type="ChEBI" id="CHEBI:57387"/>
        <dbReference type="ChEBI" id="CHEBI:197429"/>
    </reaction>
    <physiologicalReaction direction="left-to-right" evidence="6">
        <dbReference type="Rhea" id="RHEA:55341"/>
    </physiologicalReaction>
</comment>
<comment type="catalytic activity">
    <reaction evidence="3">
        <text>1-(9Z-octadecenoyl)-glycerol + (9Z)-octadecenoyl-CoA = 1,2-di-(9Z-octadecenoyl)-glycerol + CoA</text>
        <dbReference type="Rhea" id="RHEA:37915"/>
        <dbReference type="ChEBI" id="CHEBI:52323"/>
        <dbReference type="ChEBI" id="CHEBI:57287"/>
        <dbReference type="ChEBI" id="CHEBI:57387"/>
        <dbReference type="ChEBI" id="CHEBI:75342"/>
    </reaction>
    <physiologicalReaction direction="left-to-right" evidence="6">
        <dbReference type="Rhea" id="RHEA:37916"/>
    </physiologicalReaction>
</comment>
<comment type="interaction">
    <interactant intactId="EBI-12831978">
        <id>Q6ZPD8</id>
    </interactant>
    <interactant intactId="EBI-7131019">
        <id>Q8TB40</id>
        <label>ABHD4</label>
    </interactant>
    <organismsDiffer>false</organismsDiffer>
    <experiments>3</experiments>
</comment>
<comment type="interaction">
    <interactant intactId="EBI-12831978">
        <id>Q6ZPD8</id>
    </interactant>
    <interactant intactId="EBI-2813554">
        <id>Q8WTS1</id>
        <label>ABHD5</label>
    </interactant>
    <organismsDiffer>false</organismsDiffer>
    <experiments>3</experiments>
</comment>
<comment type="interaction">
    <interactant intactId="EBI-12831978">
        <id>Q6ZPD8</id>
    </interactant>
    <interactant intactId="EBI-2876502">
        <id>Q96CM8</id>
        <label>ACSF2</label>
    </interactant>
    <organismsDiffer>false</organismsDiffer>
    <experiments>3</experiments>
</comment>
<comment type="interaction">
    <interactant intactId="EBI-12831978">
        <id>Q6ZPD8</id>
    </interactant>
    <interactant intactId="EBI-13059134">
        <id>Q13520</id>
        <label>AQP6</label>
    </interactant>
    <organismsDiffer>false</organismsDiffer>
    <experiments>3</experiments>
</comment>
<comment type="interaction">
    <interactant intactId="EBI-12831978">
        <id>Q6ZPD8</id>
    </interactant>
    <interactant intactId="EBI-638194">
        <id>P53365</id>
        <label>ARFIP2</label>
    </interactant>
    <organismsDiffer>false</organismsDiffer>
    <experiments>3</experiments>
</comment>
<comment type="interaction">
    <interactant intactId="EBI-12831978">
        <id>Q6ZPD8</id>
    </interactant>
    <interactant intactId="EBI-752094">
        <id>Q12982</id>
        <label>BNIP2</label>
    </interactant>
    <organismsDiffer>false</organismsDiffer>
    <experiments>3</experiments>
</comment>
<comment type="interaction">
    <interactant intactId="EBI-12831978">
        <id>Q6ZPD8</id>
    </interactant>
    <interactant intactId="EBI-752069">
        <id>Q9H5X1</id>
        <label>CIAO2A</label>
    </interactant>
    <organismsDiffer>false</organismsDiffer>
    <experiments>3</experiments>
</comment>
<comment type="interaction">
    <interactant intactId="EBI-12831978">
        <id>Q6ZPD8</id>
    </interactant>
    <interactant intactId="EBI-517508">
        <id>Q9NR28</id>
        <label>DIABLO</label>
    </interactant>
    <organismsDiffer>false</organismsDiffer>
    <experiments>3</experiments>
</comment>
<comment type="interaction">
    <interactant intactId="EBI-12831978">
        <id>Q6ZPD8</id>
    </interactant>
    <interactant intactId="EBI-521451">
        <id>Q5VYK3</id>
        <label>ECPAS</label>
    </interactant>
    <organismsDiffer>false</organismsDiffer>
    <experiments>3</experiments>
</comment>
<comment type="interaction">
    <interactant intactId="EBI-12831978">
        <id>Q6ZPD8</id>
    </interactant>
    <interactant intactId="EBI-2513774">
        <id>O95363</id>
        <label>FARS2</label>
    </interactant>
    <organismsDiffer>false</organismsDiffer>
    <experiments>3</experiments>
</comment>
<comment type="interaction">
    <interactant intactId="EBI-12831978">
        <id>Q6ZPD8</id>
    </interactant>
    <interactant intactId="EBI-11959077">
        <id>Q6PCT2-2</id>
        <label>FBXL19</label>
    </interactant>
    <organismsDiffer>false</organismsDiffer>
    <experiments>3</experiments>
</comment>
<comment type="interaction">
    <interactant intactId="EBI-12831978">
        <id>Q6ZPD8</id>
    </interactant>
    <interactant intactId="EBI-9304251">
        <id>Q05329</id>
        <label>GAD2</label>
    </interactant>
    <organismsDiffer>false</organismsDiffer>
    <experiments>3</experiments>
</comment>
<comment type="interaction">
    <interactant intactId="EBI-12831978">
        <id>Q6ZPD8</id>
    </interactant>
    <interactant intactId="EBI-13345167">
        <id>Q8TDT2</id>
        <label>GPR152</label>
    </interactant>
    <organismsDiffer>false</organismsDiffer>
    <experiments>3</experiments>
</comment>
<comment type="interaction">
    <interactant intactId="EBI-12831978">
        <id>Q6ZPD8</id>
    </interactant>
    <interactant intactId="EBI-1052304">
        <id>Q8NBQ5</id>
        <label>HSD17B11</label>
    </interactant>
    <organismsDiffer>false</organismsDiffer>
    <experiments>3</experiments>
</comment>
<comment type="interaction">
    <interactant intactId="EBI-12831978">
        <id>Q6ZPD8</id>
    </interactant>
    <interactant intactId="EBI-2816356">
        <id>Q8IX19</id>
        <label>MCEMP1</label>
    </interactant>
    <organismsDiffer>false</organismsDiffer>
    <experiments>3</experiments>
</comment>
<comment type="interaction">
    <interactant intactId="EBI-12831978">
        <id>Q6ZPD8</id>
    </interactant>
    <interactant intactId="EBI-711788">
        <id>Q00013</id>
        <label>MPP1</label>
    </interactant>
    <organismsDiffer>false</organismsDiffer>
    <experiments>3</experiments>
</comment>
<comment type="interaction">
    <interactant intactId="EBI-12831978">
        <id>Q6ZPD8</id>
    </interactant>
    <interactant intactId="EBI-948435">
        <id>Q7Z6M4</id>
        <label>MTERF4</label>
    </interactant>
    <organismsDiffer>false</organismsDiffer>
    <experiments>3</experiments>
</comment>
<comment type="interaction">
    <interactant intactId="EBI-12831978">
        <id>Q6ZPD8</id>
    </interactant>
    <interactant intactId="EBI-709754">
        <id>Q9HB07</id>
        <label>MYG1</label>
    </interactant>
    <organismsDiffer>false</organismsDiffer>
    <experiments>3</experiments>
</comment>
<comment type="interaction">
    <interactant intactId="EBI-12831978">
        <id>Q6ZPD8</id>
    </interactant>
    <interactant intactId="EBI-3921185">
        <id>Q9H115</id>
        <label>NAPB</label>
    </interactant>
    <organismsDiffer>false</organismsDiffer>
    <experiments>3</experiments>
</comment>
<comment type="interaction">
    <interactant intactId="EBI-12831978">
        <id>Q6ZPD8</id>
    </interactant>
    <interactant intactId="EBI-11978907">
        <id>Q9ULP0-2</id>
        <label>NDRG4</label>
    </interactant>
    <organismsDiffer>false</organismsDiffer>
    <experiments>3</experiments>
</comment>
<comment type="interaction">
    <interactant intactId="EBI-12831978">
        <id>Q6ZPD8</id>
    </interactant>
    <interactant intactId="EBI-741171">
        <id>Q96AL5</id>
        <label>PBX3</label>
    </interactant>
    <organismsDiffer>false</organismsDiffer>
    <experiments>3</experiments>
</comment>
<comment type="interaction">
    <interactant intactId="EBI-12831978">
        <id>Q6ZPD8</id>
    </interactant>
    <interactant intactId="EBI-1050125">
        <id>O15173</id>
        <label>PGRMC2</label>
    </interactant>
    <organismsDiffer>false</organismsDiffer>
    <experiments>3</experiments>
</comment>
<comment type="interaction">
    <interactant intactId="EBI-12831978">
        <id>Q6ZPD8</id>
    </interactant>
    <interactant intactId="EBI-14223623">
        <id>Q9UKF7-2</id>
        <label>PITPNC1</label>
    </interactant>
    <organismsDiffer>false</organismsDiffer>
    <experiments>3</experiments>
</comment>
<comment type="interaction">
    <interactant intactId="EBI-12831978">
        <id>Q6ZPD8</id>
    </interactant>
    <interactant intactId="EBI-7545592">
        <id>Q9H6H4</id>
        <label>REEP4</label>
    </interactant>
    <organismsDiffer>false</organismsDiffer>
    <experiments>3</experiments>
</comment>
<comment type="interaction">
    <interactant intactId="EBI-12831978">
        <id>Q6ZPD8</id>
    </interactant>
    <interactant intactId="EBI-2340657">
        <id>P50876</id>
        <label>RNF144A</label>
    </interactant>
    <organismsDiffer>false</organismsDiffer>
    <experiments>3</experiments>
</comment>
<comment type="interaction">
    <interactant intactId="EBI-12831978">
        <id>Q6ZPD8</id>
    </interactant>
    <interactant intactId="EBI-348482">
        <id>Q99942</id>
        <label>RNF5</label>
    </interactant>
    <organismsDiffer>false</organismsDiffer>
    <experiments>3</experiments>
</comment>
<comment type="interaction">
    <interactant intactId="EBI-12831978">
        <id>Q6ZPD8</id>
    </interactant>
    <interactant intactId="EBI-8636004">
        <id>Q96GQ5</id>
        <label>RUSF1</label>
    </interactant>
    <organismsDiffer>false</organismsDiffer>
    <experiments>3</experiments>
</comment>
<comment type="interaction">
    <interactant intactId="EBI-12831978">
        <id>Q6ZPD8</id>
    </interactant>
    <interactant intactId="EBI-745846">
        <id>P57086</id>
        <label>SCAND1</label>
    </interactant>
    <organismsDiffer>false</organismsDiffer>
    <experiments>3</experiments>
</comment>
<comment type="interaction">
    <interactant intactId="EBI-12831978">
        <id>Q6ZPD8</id>
    </interactant>
    <interactant intactId="EBI-17247926">
        <id>Q9NY72</id>
        <label>SCN3B</label>
    </interactant>
    <organismsDiffer>false</organismsDiffer>
    <experiments>3</experiments>
</comment>
<comment type="interaction">
    <interactant intactId="EBI-12831978">
        <id>Q6ZPD8</id>
    </interactant>
    <interactant intactId="EBI-3923031">
        <id>Q14973</id>
        <label>SLC10A1</label>
    </interactant>
    <organismsDiffer>false</organismsDiffer>
    <experiments>3</experiments>
</comment>
<comment type="interaction">
    <interactant intactId="EBI-12831978">
        <id>Q6ZPD8</id>
    </interactant>
    <interactant intactId="EBI-18159983">
        <id>Q3KNW5</id>
        <label>SLC10A6</label>
    </interactant>
    <organismsDiffer>false</organismsDiffer>
    <experiments>3</experiments>
</comment>
<comment type="interaction">
    <interactant intactId="EBI-12831978">
        <id>Q6ZPD8</id>
    </interactant>
    <interactant intactId="EBI-2872322">
        <id>Q9H0W8</id>
        <label>SMG9</label>
    </interactant>
    <organismsDiffer>false</organismsDiffer>
    <experiments>3</experiments>
</comment>
<comment type="interaction">
    <interactant intactId="EBI-12831978">
        <id>Q6ZPD8</id>
    </interactant>
    <interactant intactId="EBI-724909">
        <id>O95219</id>
        <label>SNX4</label>
    </interactant>
    <organismsDiffer>false</organismsDiffer>
    <experiments>3</experiments>
</comment>
<comment type="interaction">
    <interactant intactId="EBI-12831978">
        <id>Q6ZPD8</id>
    </interactant>
    <interactant intactId="EBI-722932">
        <id>P49675</id>
        <label>STAR</label>
    </interactant>
    <organismsDiffer>false</organismsDiffer>
    <experiments>3</experiments>
</comment>
<comment type="interaction">
    <interactant intactId="EBI-12831978">
        <id>Q6ZPD8</id>
    </interactant>
    <interactant intactId="EBI-726691">
        <id>Q8WY91</id>
        <label>THAP4</label>
    </interactant>
    <organismsDiffer>false</organismsDiffer>
    <experiments>3</experiments>
</comment>
<comment type="interaction">
    <interactant intactId="EBI-12831978">
        <id>Q6ZPD8</id>
    </interactant>
    <interactant intactId="EBI-11603430">
        <id>Q6PL24</id>
        <label>TMED8</label>
    </interactant>
    <organismsDiffer>false</organismsDiffer>
    <experiments>3</experiments>
</comment>
<comment type="interaction">
    <interactant intactId="EBI-12831978">
        <id>Q6ZPD8</id>
    </interactant>
    <interactant intactId="EBI-13342951">
        <id>Q96AN5</id>
        <label>TMEM143</label>
    </interactant>
    <organismsDiffer>false</organismsDiffer>
    <experiments>3</experiments>
</comment>
<comment type="interaction">
    <interactant intactId="EBI-12831978">
        <id>Q6ZPD8</id>
    </interactant>
    <interactant intactId="EBI-8638294">
        <id>Q9NUH8</id>
        <label>TMEM14B</label>
    </interactant>
    <organismsDiffer>false</organismsDiffer>
    <experiments>3</experiments>
</comment>
<comment type="interaction">
    <interactant intactId="EBI-12831978">
        <id>Q6ZPD8</id>
    </interactant>
    <interactant intactId="EBI-2870087">
        <id>Q8WV15</id>
        <label>TMEM255B</label>
    </interactant>
    <organismsDiffer>false</organismsDiffer>
    <experiments>3</experiments>
</comment>
<comment type="interaction">
    <interactant intactId="EBI-12831978">
        <id>Q6ZPD8</id>
    </interactant>
    <interactant intactId="EBI-6447886">
        <id>Q9Y320</id>
        <label>TMX2</label>
    </interactant>
    <organismsDiffer>false</organismsDiffer>
    <experiments>3</experiments>
</comment>
<comment type="interaction">
    <interactant intactId="EBI-12831978">
        <id>Q6ZPD8</id>
    </interactant>
    <interactant intactId="EBI-10210710">
        <id>P49638</id>
        <label>TTPA</label>
    </interactant>
    <organismsDiffer>false</organismsDiffer>
    <experiments>3</experiments>
</comment>
<comment type="interaction">
    <interactant intactId="EBI-12831978">
        <id>Q6ZPD8</id>
    </interactant>
    <interactant intactId="EBI-12261790">
        <id>A0A384ME17</id>
        <label>TUFM</label>
    </interactant>
    <organismsDiffer>false</organismsDiffer>
    <experiments>3</experiments>
</comment>
<comment type="interaction">
    <interactant intactId="EBI-12831978">
        <id>Q6ZPD8</id>
    </interactant>
    <interactant intactId="EBI-12205107">
        <id>Q9Y4P8-4</id>
        <label>WIPI2</label>
    </interactant>
    <organismsDiffer>false</organismsDiffer>
    <experiments>3</experiments>
</comment>
<comment type="subcellular location">
    <subcellularLocation>
        <location>Endoplasmic reticulum membrane</location>
        <topology evidence="1">Multi-pass membrane protein</topology>
    </subcellularLocation>
</comment>
<comment type="tissue specificity">
    <text evidence="2">Expressed in all tissues tested except pancreas.</text>
</comment>
<comment type="similarity">
    <text evidence="5">Belongs to the diacylglycerol acyltransferase family.</text>
</comment>
<evidence type="ECO:0000255" key="1"/>
<evidence type="ECO:0000269" key="2">
    <source>
    </source>
</evidence>
<evidence type="ECO:0000269" key="3">
    <source>
    </source>
</evidence>
<evidence type="ECO:0000303" key="4">
    <source>
    </source>
</evidence>
<evidence type="ECO:0000305" key="5"/>
<evidence type="ECO:0000305" key="6">
    <source>
    </source>
</evidence>
<evidence type="ECO:0000312" key="7">
    <source>
        <dbReference type="HGNC" id="HGNC:23250"/>
    </source>
</evidence>
<accession>Q6ZPD8</accession>
<accession>Q6IEE2</accession>
<gene>
    <name evidence="7" type="primary">DGAT2L6</name>
    <name evidence="4" type="synonym">DC3</name>
</gene>
<name>DG2L6_HUMAN</name>